<keyword id="KW-0256">Endoplasmic reticulum</keyword>
<keyword id="KW-0328">Glycosyltransferase</keyword>
<keyword id="KW-0460">Magnesium</keyword>
<keyword id="KW-0464">Manganese</keyword>
<keyword id="KW-0472">Membrane</keyword>
<keyword id="KW-0479">Metal-binding</keyword>
<keyword id="KW-1185">Reference proteome</keyword>
<keyword id="KW-0808">Transferase</keyword>
<keyword id="KW-0812">Transmembrane</keyword>
<keyword id="KW-1133">Transmembrane helix</keyword>
<protein>
    <recommendedName>
        <fullName>Dolichol-phosphate mannosyltransferase</fullName>
        <ecNumber evidence="1">2.4.1.83</ecNumber>
    </recommendedName>
    <alternativeName>
        <fullName>Dolichol-phosphate mannose synthase</fullName>
        <shortName>DPM synthase</shortName>
    </alternativeName>
    <alternativeName>
        <fullName>Dolichyl-phosphate beta-D-mannosyltransferase</fullName>
    </alternativeName>
    <alternativeName>
        <fullName>Mannose-P-dolichol synthase</fullName>
        <shortName>MPD synthase</shortName>
    </alternativeName>
</protein>
<comment type="function">
    <text evidence="1">Transfers mannose from GDP-mannose to dolichol monophosphate to form dolichol phosphate mannose (Dol-P-Man) which is the mannosyl donor in pathways leading to N-glycosylation, glycosyl phosphatidylinositol membrane anchoring, and O-mannosylation of proteins.</text>
</comment>
<comment type="catalytic activity">
    <reaction evidence="1">
        <text>a di-trans,poly-cis-dolichyl phosphate + GDP-alpha-D-mannose = a di-trans,poly-cis-dolichyl beta-D-mannosyl phosphate + GDP</text>
        <dbReference type="Rhea" id="RHEA:21184"/>
        <dbReference type="Rhea" id="RHEA-COMP:19498"/>
        <dbReference type="Rhea" id="RHEA-COMP:19501"/>
        <dbReference type="ChEBI" id="CHEBI:57527"/>
        <dbReference type="ChEBI" id="CHEBI:57683"/>
        <dbReference type="ChEBI" id="CHEBI:58189"/>
        <dbReference type="ChEBI" id="CHEBI:58211"/>
        <dbReference type="EC" id="2.4.1.83"/>
    </reaction>
</comment>
<comment type="cofactor">
    <cofactor evidence="2">
        <name>Mg(2+)</name>
        <dbReference type="ChEBI" id="CHEBI:18420"/>
    </cofactor>
    <cofactor evidence="2">
        <name>Mn(2+)</name>
        <dbReference type="ChEBI" id="CHEBI:29035"/>
    </cofactor>
    <cofactor evidence="2">
        <name>Ca(2+)</name>
        <dbReference type="ChEBI" id="CHEBI:29108"/>
    </cofactor>
    <text evidence="2">Binds 1 divalent metal cation.</text>
</comment>
<comment type="pathway">
    <text evidence="1">Protein modification; protein glycosylation.</text>
</comment>
<comment type="subcellular location">
    <subcellularLocation>
        <location evidence="1">Endoplasmic reticulum membrane</location>
        <topology evidence="3">Single-pass membrane protein</topology>
    </subcellularLocation>
</comment>
<comment type="similarity">
    <text evidence="5">Belongs to the glycosyltransferase 2 family.</text>
</comment>
<gene>
    <name type="primary">DPM1</name>
    <name type="ORF">UMAG_06329</name>
</gene>
<organism>
    <name type="scientific">Mycosarcoma maydis</name>
    <name type="common">Corn smut fungus</name>
    <name type="synonym">Ustilago maydis</name>
    <dbReference type="NCBI Taxonomy" id="5270"/>
    <lineage>
        <taxon>Eukaryota</taxon>
        <taxon>Fungi</taxon>
        <taxon>Dikarya</taxon>
        <taxon>Basidiomycota</taxon>
        <taxon>Ustilaginomycotina</taxon>
        <taxon>Ustilaginomycetes</taxon>
        <taxon>Ustilaginales</taxon>
        <taxon>Ustilaginaceae</taxon>
        <taxon>Mycosarcoma</taxon>
    </lineage>
</organism>
<evidence type="ECO:0000250" key="1">
    <source>
        <dbReference type="UniProtKB" id="P14020"/>
    </source>
</evidence>
<evidence type="ECO:0000250" key="2">
    <source>
        <dbReference type="UniProtKB" id="Q8U4M3"/>
    </source>
</evidence>
<evidence type="ECO:0000255" key="3"/>
<evidence type="ECO:0000256" key="4">
    <source>
        <dbReference type="SAM" id="MobiDB-lite"/>
    </source>
</evidence>
<evidence type="ECO:0000305" key="5"/>
<accession>P54856</accession>
<accession>A0A0D1CUY2</accession>
<accession>Q4P0N4</accession>
<dbReference type="EC" id="2.4.1.83" evidence="1"/>
<dbReference type="EMBL" id="U54797">
    <property type="protein sequence ID" value="AAC49401.1"/>
    <property type="molecule type" value="Genomic_DNA"/>
</dbReference>
<dbReference type="EMBL" id="CM003143">
    <property type="protein sequence ID" value="KIS70243.1"/>
    <property type="molecule type" value="Genomic_DNA"/>
</dbReference>
<dbReference type="PIR" id="S71642">
    <property type="entry name" value="S71642"/>
</dbReference>
<dbReference type="RefSeq" id="XP_011388316.1">
    <property type="nucleotide sequence ID" value="XM_011390014.1"/>
</dbReference>
<dbReference type="SMR" id="P54856"/>
<dbReference type="FunCoup" id="P54856">
    <property type="interactions" value="427"/>
</dbReference>
<dbReference type="STRING" id="237631.P54856"/>
<dbReference type="CAZy" id="GT2">
    <property type="family name" value="Glycosyltransferase Family 2"/>
</dbReference>
<dbReference type="EnsemblFungi" id="KIS70243">
    <property type="protein sequence ID" value="KIS70243"/>
    <property type="gene ID" value="UMAG_06329"/>
</dbReference>
<dbReference type="GeneID" id="23565949"/>
<dbReference type="KEGG" id="uma:UMAG_06329"/>
<dbReference type="VEuPathDB" id="FungiDB:UMAG_06329"/>
<dbReference type="eggNOG" id="KOG2978">
    <property type="taxonomic scope" value="Eukaryota"/>
</dbReference>
<dbReference type="HOGENOM" id="CLU_033536_13_1_1"/>
<dbReference type="InParanoid" id="P54856"/>
<dbReference type="OMA" id="SAWANFY"/>
<dbReference type="OrthoDB" id="2603at2759"/>
<dbReference type="UniPathway" id="UPA00378"/>
<dbReference type="Proteomes" id="UP000000561">
    <property type="component" value="Chromosome 4"/>
</dbReference>
<dbReference type="GO" id="GO:0005789">
    <property type="term" value="C:endoplasmic reticulum membrane"/>
    <property type="evidence" value="ECO:0000318"/>
    <property type="project" value="GO_Central"/>
</dbReference>
<dbReference type="GO" id="GO:0004582">
    <property type="term" value="F:dolichyl-phosphate beta-D-mannosyltransferase activity"/>
    <property type="evidence" value="ECO:0000250"/>
    <property type="project" value="UniProtKB"/>
</dbReference>
<dbReference type="GO" id="GO:0046872">
    <property type="term" value="F:metal ion binding"/>
    <property type="evidence" value="ECO:0000250"/>
    <property type="project" value="UniProtKB"/>
</dbReference>
<dbReference type="GO" id="GO:0180047">
    <property type="term" value="P:dolichol phosphate mannose biosynthetic process"/>
    <property type="evidence" value="ECO:0000250"/>
    <property type="project" value="UniProtKB"/>
</dbReference>
<dbReference type="GO" id="GO:0006488">
    <property type="term" value="P:dolichol-linked oligosaccharide biosynthetic process"/>
    <property type="evidence" value="ECO:0000318"/>
    <property type="project" value="GO_Central"/>
</dbReference>
<dbReference type="GO" id="GO:0006506">
    <property type="term" value="P:GPI anchor biosynthetic process"/>
    <property type="evidence" value="ECO:0000318"/>
    <property type="project" value="GO_Central"/>
</dbReference>
<dbReference type="GO" id="GO:0035269">
    <property type="term" value="P:protein O-linked mannosylation"/>
    <property type="evidence" value="ECO:0000250"/>
    <property type="project" value="UniProtKB"/>
</dbReference>
<dbReference type="CDD" id="cd06442">
    <property type="entry name" value="DPM1_like"/>
    <property type="match status" value="1"/>
</dbReference>
<dbReference type="FunFam" id="3.90.550.10:FF:000119">
    <property type="entry name" value="Dolichol-phosphate mannosyltransferase subunit 1"/>
    <property type="match status" value="1"/>
</dbReference>
<dbReference type="Gene3D" id="3.90.550.10">
    <property type="entry name" value="Spore Coat Polysaccharide Biosynthesis Protein SpsA, Chain A"/>
    <property type="match status" value="1"/>
</dbReference>
<dbReference type="InterPro" id="IPR039528">
    <property type="entry name" value="DPM1-like"/>
</dbReference>
<dbReference type="InterPro" id="IPR001173">
    <property type="entry name" value="Glyco_trans_2-like"/>
</dbReference>
<dbReference type="InterPro" id="IPR029044">
    <property type="entry name" value="Nucleotide-diphossugar_trans"/>
</dbReference>
<dbReference type="PANTHER" id="PTHR43398">
    <property type="entry name" value="DOLICHOL-PHOSPHATE MANNOSYLTRANSFERASE SUBUNIT 1"/>
    <property type="match status" value="1"/>
</dbReference>
<dbReference type="PANTHER" id="PTHR43398:SF1">
    <property type="entry name" value="DOLICHOL-PHOSPHATE MANNOSYLTRANSFERASE SUBUNIT 1"/>
    <property type="match status" value="1"/>
</dbReference>
<dbReference type="Pfam" id="PF00535">
    <property type="entry name" value="Glycos_transf_2"/>
    <property type="match status" value="1"/>
</dbReference>
<dbReference type="SUPFAM" id="SSF53448">
    <property type="entry name" value="Nucleotide-diphospho-sugar transferases"/>
    <property type="match status" value="1"/>
</dbReference>
<reference key="1">
    <citation type="journal article" date="1996" name="Yeast">
        <title>The isolation of a Dol-P-Man synthase from Ustilago maydis that functions in Saccharomyces cerevisiae.</title>
        <authorList>
            <person name="Zimmerman J.W."/>
            <person name="Specht C.A."/>
            <person name="Cazares B.X."/>
            <person name="Robbins P.W."/>
        </authorList>
    </citation>
    <scope>NUCLEOTIDE SEQUENCE [GENOMIC DNA]</scope>
    <source>
        <strain>H-156S</strain>
    </source>
</reference>
<reference key="2">
    <citation type="journal article" date="2006" name="Nature">
        <title>Insights from the genome of the biotrophic fungal plant pathogen Ustilago maydis.</title>
        <authorList>
            <person name="Kaemper J."/>
            <person name="Kahmann R."/>
            <person name="Boelker M."/>
            <person name="Ma L.-J."/>
            <person name="Brefort T."/>
            <person name="Saville B.J."/>
            <person name="Banuett F."/>
            <person name="Kronstad J.W."/>
            <person name="Gold S.E."/>
            <person name="Mueller O."/>
            <person name="Perlin M.H."/>
            <person name="Woesten H.A.B."/>
            <person name="de Vries R."/>
            <person name="Ruiz-Herrera J."/>
            <person name="Reynaga-Pena C.G."/>
            <person name="Snetselaar K."/>
            <person name="McCann M."/>
            <person name="Perez-Martin J."/>
            <person name="Feldbruegge M."/>
            <person name="Basse C.W."/>
            <person name="Steinberg G."/>
            <person name="Ibeas J.I."/>
            <person name="Holloman W."/>
            <person name="Guzman P."/>
            <person name="Farman M.L."/>
            <person name="Stajich J.E."/>
            <person name="Sentandreu R."/>
            <person name="Gonzalez-Prieto J.M."/>
            <person name="Kennell J.C."/>
            <person name="Molina L."/>
            <person name="Schirawski J."/>
            <person name="Mendoza-Mendoza A."/>
            <person name="Greilinger D."/>
            <person name="Muench K."/>
            <person name="Roessel N."/>
            <person name="Scherer M."/>
            <person name="Vranes M."/>
            <person name="Ladendorf O."/>
            <person name="Vincon V."/>
            <person name="Fuchs U."/>
            <person name="Sandrock B."/>
            <person name="Meng S."/>
            <person name="Ho E.C.H."/>
            <person name="Cahill M.J."/>
            <person name="Boyce K.J."/>
            <person name="Klose J."/>
            <person name="Klosterman S.J."/>
            <person name="Deelstra H.J."/>
            <person name="Ortiz-Castellanos L."/>
            <person name="Li W."/>
            <person name="Sanchez-Alonso P."/>
            <person name="Schreier P.H."/>
            <person name="Haeuser-Hahn I."/>
            <person name="Vaupel M."/>
            <person name="Koopmann E."/>
            <person name="Friedrich G."/>
            <person name="Voss H."/>
            <person name="Schlueter T."/>
            <person name="Margolis J."/>
            <person name="Platt D."/>
            <person name="Swimmer C."/>
            <person name="Gnirke A."/>
            <person name="Chen F."/>
            <person name="Vysotskaia V."/>
            <person name="Mannhaupt G."/>
            <person name="Gueldener U."/>
            <person name="Muensterkoetter M."/>
            <person name="Haase D."/>
            <person name="Oesterheld M."/>
            <person name="Mewes H.-W."/>
            <person name="Mauceli E.W."/>
            <person name="DeCaprio D."/>
            <person name="Wade C.M."/>
            <person name="Butler J."/>
            <person name="Young S.K."/>
            <person name="Jaffe D.B."/>
            <person name="Calvo S.E."/>
            <person name="Nusbaum C."/>
            <person name="Galagan J.E."/>
            <person name="Birren B.W."/>
        </authorList>
    </citation>
    <scope>NUCLEOTIDE SEQUENCE [LARGE SCALE GENOMIC DNA]</scope>
    <source>
        <strain>DSM 14603 / FGSC 9021 / UM521</strain>
    </source>
</reference>
<reference key="3">
    <citation type="submission" date="2014-09" db="EMBL/GenBank/DDBJ databases">
        <authorList>
            <person name="Gueldener U."/>
            <person name="Muensterkoetter M."/>
            <person name="Walter M.C."/>
            <person name="Mannhaupt G."/>
            <person name="Kahmann R."/>
        </authorList>
    </citation>
    <scope>GENOME REANNOTATION</scope>
    <source>
        <strain>DSM 14603 / FGSC 9021 / UM521</strain>
    </source>
</reference>
<name>DPM1_MYCMD</name>
<sequence>MSIALDMDASAKMRKQPGSSGWSTSSTPSCSVIVPAFRENLNLRPLVTRLSSAFASQSSSELANTEIIIVDDNSRDGSVETVSALQSEGYNVRIIVRTSERGLSSAVVRGFREARGQRMICMDADLQHPPEAVPSLLLALNGQKSFVLGTRYGVGVSMDKDWPLHRRIISSGARMLARPLTSASDPMSGFFGITKHSFHTADHHINAQGFKIALDLLVKSGVHSTDIAEVPFSFGLRQEGESKLDGKVMFKYLQQLVELYRFRFGTVPIVFVLIVLLVLALYIWSHVLAPMLGA</sequence>
<feature type="chain" id="PRO_0000059174" description="Dolichol-phosphate mannosyltransferase">
    <location>
        <begin position="1"/>
        <end position="294"/>
    </location>
</feature>
<feature type="topological domain" description="Cytoplasmic" evidence="5">
    <location>
        <begin position="1"/>
        <end position="263"/>
    </location>
</feature>
<feature type="transmembrane region" description="Helical" evidence="3">
    <location>
        <begin position="264"/>
        <end position="284"/>
    </location>
</feature>
<feature type="topological domain" description="Lumenal" evidence="5">
    <location>
        <begin position="285"/>
        <end position="294"/>
    </location>
</feature>
<feature type="region of interest" description="Disordered" evidence="4">
    <location>
        <begin position="1"/>
        <end position="27"/>
    </location>
</feature>
<feature type="compositionally biased region" description="Low complexity" evidence="4">
    <location>
        <begin position="17"/>
        <end position="27"/>
    </location>
</feature>
<feature type="binding site" evidence="2">
    <location>
        <position position="35"/>
    </location>
    <ligand>
        <name>GDP-alpha-D-mannose</name>
        <dbReference type="ChEBI" id="CHEBI:57527"/>
    </ligand>
</feature>
<feature type="binding site" evidence="2">
    <location>
        <position position="39"/>
    </location>
    <ligand>
        <name>GDP-alpha-D-mannose</name>
        <dbReference type="ChEBI" id="CHEBI:57527"/>
    </ligand>
</feature>
<feature type="binding site" evidence="2">
    <location>
        <position position="70"/>
    </location>
    <ligand>
        <name>GDP-alpha-D-mannose</name>
        <dbReference type="ChEBI" id="CHEBI:57527"/>
    </ligand>
</feature>
<feature type="binding site" evidence="2">
    <location>
        <position position="72"/>
    </location>
    <ligand>
        <name>GDP-alpha-D-mannose</name>
        <dbReference type="ChEBI" id="CHEBI:57527"/>
    </ligand>
</feature>
<feature type="binding site" evidence="2">
    <location>
        <position position="123"/>
    </location>
    <ligand>
        <name>GDP-alpha-D-mannose</name>
        <dbReference type="ChEBI" id="CHEBI:57527"/>
    </ligand>
</feature>
<feature type="binding site" evidence="2">
    <location>
        <position position="124"/>
    </location>
    <ligand>
        <name>GDP-alpha-D-mannose</name>
        <dbReference type="ChEBI" id="CHEBI:57527"/>
    </ligand>
</feature>
<feature type="binding site" evidence="2">
    <location>
        <position position="125"/>
    </location>
    <ligand>
        <name>GDP-alpha-D-mannose</name>
        <dbReference type="ChEBI" id="CHEBI:57527"/>
    </ligand>
</feature>
<feature type="binding site" evidence="2">
    <location>
        <position position="125"/>
    </location>
    <ligand>
        <name>Mg(2+)</name>
        <dbReference type="ChEBI" id="CHEBI:18420"/>
    </ligand>
</feature>
<feature type="binding site" evidence="2">
    <location>
        <position position="125"/>
    </location>
    <ligand>
        <name>Mn(2+)</name>
        <dbReference type="ChEBI" id="CHEBI:29035"/>
    </ligand>
</feature>
<feature type="binding site" evidence="2">
    <location>
        <position position="127"/>
    </location>
    <ligand>
        <name>GDP-alpha-D-mannose</name>
        <dbReference type="ChEBI" id="CHEBI:57527"/>
    </ligand>
</feature>
<feature type="binding site" evidence="2">
    <location>
        <position position="127"/>
    </location>
    <ligand>
        <name>Mg(2+)</name>
        <dbReference type="ChEBI" id="CHEBI:18420"/>
    </ligand>
</feature>
<feature type="binding site" evidence="2">
    <location>
        <position position="127"/>
    </location>
    <ligand>
        <name>Mn(2+)</name>
        <dbReference type="ChEBI" id="CHEBI:29035"/>
    </ligand>
</feature>
<feature type="binding site" evidence="2">
    <location>
        <position position="151"/>
    </location>
    <ligand>
        <name>GDP-alpha-D-mannose</name>
        <dbReference type="ChEBI" id="CHEBI:57527"/>
    </ligand>
</feature>
<feature type="binding site" evidence="2">
    <location>
        <position position="211"/>
    </location>
    <ligand>
        <name>GDP-alpha-D-mannose</name>
        <dbReference type="ChEBI" id="CHEBI:57527"/>
    </ligand>
</feature>
<feature type="binding site" evidence="2">
    <location>
        <position position="237"/>
    </location>
    <ligand>
        <name>GDP-alpha-D-mannose</name>
        <dbReference type="ChEBI" id="CHEBI:57527"/>
    </ligand>
</feature>
<feature type="binding site" evidence="2">
    <location>
        <position position="243"/>
    </location>
    <ligand>
        <name>GDP-alpha-D-mannose</name>
        <dbReference type="ChEBI" id="CHEBI:57527"/>
    </ligand>
</feature>
<feature type="sequence conflict" description="In Ref. 1; AAC49401." evidence="5" ref="1">
    <original>R</original>
    <variation>A</variation>
    <location>
        <position position="97"/>
    </location>
</feature>
<proteinExistence type="inferred from homology"/>